<reference key="1">
    <citation type="journal article" date="1988" name="Eur. J. Biochem.">
        <title>Human heme oxygenase cDNA and induction of its mRNA by hemin.</title>
        <authorList>
            <person name="Yoshida T."/>
            <person name="Biro P."/>
            <person name="Cohen T."/>
            <person name="Mueller R.M."/>
            <person name="Shibahara S."/>
        </authorList>
    </citation>
    <scope>NUCLEOTIDE SEQUENCE [MRNA]</scope>
    <scope>INDUCTION</scope>
</reference>
<reference key="2">
    <citation type="journal article" date="2004" name="Genome Biol.">
        <title>A genome annotation-driven approach to cloning the human ORFeome.</title>
        <authorList>
            <person name="Collins J.E."/>
            <person name="Wright C.L."/>
            <person name="Edwards C.A."/>
            <person name="Davis M.P."/>
            <person name="Grinham J.A."/>
            <person name="Cole C.G."/>
            <person name="Goward M.E."/>
            <person name="Aguado B."/>
            <person name="Mallya M."/>
            <person name="Mokrab Y."/>
            <person name="Huckle E.J."/>
            <person name="Beare D.M."/>
            <person name="Dunham I."/>
        </authorList>
    </citation>
    <scope>NUCLEOTIDE SEQUENCE [LARGE SCALE MRNA]</scope>
</reference>
<reference key="3">
    <citation type="submission" date="2003-11" db="EMBL/GenBank/DDBJ databases">
        <authorList>
            <consortium name="SeattleSNPs variation discovery resource"/>
        </authorList>
    </citation>
    <scope>NUCLEOTIDE SEQUENCE [GENOMIC DNA]</scope>
    <scope>VARIANT HIS-7</scope>
</reference>
<reference key="4">
    <citation type="journal article" date="1999" name="Nature">
        <title>The DNA sequence of human chromosome 22.</title>
        <authorList>
            <person name="Dunham I."/>
            <person name="Hunt A.R."/>
            <person name="Collins J.E."/>
            <person name="Bruskiewich R."/>
            <person name="Beare D.M."/>
            <person name="Clamp M."/>
            <person name="Smink L.J."/>
            <person name="Ainscough R."/>
            <person name="Almeida J.P."/>
            <person name="Babbage A.K."/>
            <person name="Bagguley C."/>
            <person name="Bailey J."/>
            <person name="Barlow K.F."/>
            <person name="Bates K.N."/>
            <person name="Beasley O.P."/>
            <person name="Bird C.P."/>
            <person name="Blakey S.E."/>
            <person name="Bridgeman A.M."/>
            <person name="Buck D."/>
            <person name="Burgess J."/>
            <person name="Burrill W.D."/>
            <person name="Burton J."/>
            <person name="Carder C."/>
            <person name="Carter N.P."/>
            <person name="Chen Y."/>
            <person name="Clark G."/>
            <person name="Clegg S.M."/>
            <person name="Cobley V.E."/>
            <person name="Cole C.G."/>
            <person name="Collier R.E."/>
            <person name="Connor R."/>
            <person name="Conroy D."/>
            <person name="Corby N.R."/>
            <person name="Coville G.J."/>
            <person name="Cox A.V."/>
            <person name="Davis J."/>
            <person name="Dawson E."/>
            <person name="Dhami P.D."/>
            <person name="Dockree C."/>
            <person name="Dodsworth S.J."/>
            <person name="Durbin R.M."/>
            <person name="Ellington A.G."/>
            <person name="Evans K.L."/>
            <person name="Fey J.M."/>
            <person name="Fleming K."/>
            <person name="French L."/>
            <person name="Garner A.A."/>
            <person name="Gilbert J.G.R."/>
            <person name="Goward M.E."/>
            <person name="Grafham D.V."/>
            <person name="Griffiths M.N.D."/>
            <person name="Hall C."/>
            <person name="Hall R.E."/>
            <person name="Hall-Tamlyn G."/>
            <person name="Heathcott R.W."/>
            <person name="Ho S."/>
            <person name="Holmes S."/>
            <person name="Hunt S.E."/>
            <person name="Jones M.C."/>
            <person name="Kershaw J."/>
            <person name="Kimberley A.M."/>
            <person name="King A."/>
            <person name="Laird G.K."/>
            <person name="Langford C.F."/>
            <person name="Leversha M.A."/>
            <person name="Lloyd C."/>
            <person name="Lloyd D.M."/>
            <person name="Martyn I.D."/>
            <person name="Mashreghi-Mohammadi M."/>
            <person name="Matthews L.H."/>
            <person name="Mccann O.T."/>
            <person name="Mcclay J."/>
            <person name="Mclaren S."/>
            <person name="McMurray A.A."/>
            <person name="Milne S.A."/>
            <person name="Mortimore B.J."/>
            <person name="Odell C.N."/>
            <person name="Pavitt R."/>
            <person name="Pearce A.V."/>
            <person name="Pearson D."/>
            <person name="Phillimore B.J.C.T."/>
            <person name="Phillips S.H."/>
            <person name="Plumb R.W."/>
            <person name="Ramsay H."/>
            <person name="Ramsey Y."/>
            <person name="Rogers L."/>
            <person name="Ross M.T."/>
            <person name="Scott C.E."/>
            <person name="Sehra H.K."/>
            <person name="Skuce C.D."/>
            <person name="Smalley S."/>
            <person name="Smith M.L."/>
            <person name="Soderlund C."/>
            <person name="Spragon L."/>
            <person name="Steward C.A."/>
            <person name="Sulston J.E."/>
            <person name="Swann R.M."/>
            <person name="Vaudin M."/>
            <person name="Wall M."/>
            <person name="Wallis J.M."/>
            <person name="Whiteley M.N."/>
            <person name="Willey D.L."/>
            <person name="Williams L."/>
            <person name="Williams S.A."/>
            <person name="Williamson H."/>
            <person name="Wilmer T.E."/>
            <person name="Wilming L."/>
            <person name="Wright C.L."/>
            <person name="Hubbard T."/>
            <person name="Bentley D.R."/>
            <person name="Beck S."/>
            <person name="Rogers J."/>
            <person name="Shimizu N."/>
            <person name="Minoshima S."/>
            <person name="Kawasaki K."/>
            <person name="Sasaki T."/>
            <person name="Asakawa S."/>
            <person name="Kudoh J."/>
            <person name="Shintani A."/>
            <person name="Shibuya K."/>
            <person name="Yoshizaki Y."/>
            <person name="Aoki N."/>
            <person name="Mitsuyama S."/>
            <person name="Roe B.A."/>
            <person name="Chen F."/>
            <person name="Chu L."/>
            <person name="Crabtree J."/>
            <person name="Deschamps S."/>
            <person name="Do A."/>
            <person name="Do T."/>
            <person name="Dorman A."/>
            <person name="Fang F."/>
            <person name="Fu Y."/>
            <person name="Hu P."/>
            <person name="Hua A."/>
            <person name="Kenton S."/>
            <person name="Lai H."/>
            <person name="Lao H.I."/>
            <person name="Lewis J."/>
            <person name="Lewis S."/>
            <person name="Lin S.-P."/>
            <person name="Loh P."/>
            <person name="Malaj E."/>
            <person name="Nguyen T."/>
            <person name="Pan H."/>
            <person name="Phan S."/>
            <person name="Qi S."/>
            <person name="Qian Y."/>
            <person name="Ray L."/>
            <person name="Ren Q."/>
            <person name="Shaull S."/>
            <person name="Sloan D."/>
            <person name="Song L."/>
            <person name="Wang Q."/>
            <person name="Wang Y."/>
            <person name="Wang Z."/>
            <person name="White J."/>
            <person name="Willingham D."/>
            <person name="Wu H."/>
            <person name="Yao Z."/>
            <person name="Zhan M."/>
            <person name="Zhang G."/>
            <person name="Chissoe S."/>
            <person name="Murray J."/>
            <person name="Miller N."/>
            <person name="Minx P."/>
            <person name="Fulton R."/>
            <person name="Johnson D."/>
            <person name="Bemis G."/>
            <person name="Bentley D."/>
            <person name="Bradshaw H."/>
            <person name="Bourne S."/>
            <person name="Cordes M."/>
            <person name="Du Z."/>
            <person name="Fulton L."/>
            <person name="Goela D."/>
            <person name="Graves T."/>
            <person name="Hawkins J."/>
            <person name="Hinds K."/>
            <person name="Kemp K."/>
            <person name="Latreille P."/>
            <person name="Layman D."/>
            <person name="Ozersky P."/>
            <person name="Rohlfing T."/>
            <person name="Scheet P."/>
            <person name="Walker C."/>
            <person name="Wamsley A."/>
            <person name="Wohldmann P."/>
            <person name="Pepin K."/>
            <person name="Nelson J."/>
            <person name="Korf I."/>
            <person name="Bedell J.A."/>
            <person name="Hillier L.W."/>
            <person name="Mardis E."/>
            <person name="Waterston R."/>
            <person name="Wilson R."/>
            <person name="Emanuel B.S."/>
            <person name="Shaikh T."/>
            <person name="Kurahashi H."/>
            <person name="Saitta S."/>
            <person name="Budarf M.L."/>
            <person name="McDermid H.E."/>
            <person name="Johnson A."/>
            <person name="Wong A.C.C."/>
            <person name="Morrow B.E."/>
            <person name="Edelmann L."/>
            <person name="Kim U.J."/>
            <person name="Shizuya H."/>
            <person name="Simon M.I."/>
            <person name="Dumanski J.P."/>
            <person name="Peyrard M."/>
            <person name="Kedra D."/>
            <person name="Seroussi E."/>
            <person name="Fransson I."/>
            <person name="Tapia I."/>
            <person name="Bruder C.E."/>
            <person name="O'Brien K.P."/>
            <person name="Wilkinson P."/>
            <person name="Bodenteich A."/>
            <person name="Hartman K."/>
            <person name="Hu X."/>
            <person name="Khan A.S."/>
            <person name="Lane L."/>
            <person name="Tilahun Y."/>
            <person name="Wright H."/>
        </authorList>
    </citation>
    <scope>NUCLEOTIDE SEQUENCE [LARGE SCALE GENOMIC DNA]</scope>
</reference>
<reference key="5">
    <citation type="journal article" date="1989" name="Proc. Natl. Acad. Sci. U.S.A.">
        <title>Heme oxygenase is the major 32-kDa stress protein induced in human skin fibroblasts by UVA radiation, hydrogen peroxide, and sodium arsenite.</title>
        <authorList>
            <person name="Keyse S.M."/>
            <person name="Tyrrell R.M."/>
        </authorList>
    </citation>
    <scope>NUCLEOTIDE SEQUENCE [MRNA] OF 1-103</scope>
    <scope>INDUCTION</scope>
    <source>
        <tissue>Foreskin</tissue>
    </source>
</reference>
<reference key="6">
    <citation type="journal article" date="1989" name="Eur. J. Biochem.">
        <title>Structural organization of the human heme oxygenase gene and the function of its promoter.</title>
        <authorList>
            <person name="Shibahara S."/>
            <person name="Sato M."/>
            <person name="Muller R.M."/>
            <person name="Yoshida T."/>
        </authorList>
    </citation>
    <scope>NUCLEOTIDE SEQUENCE [GENOMIC DNA] OF 1-7</scope>
</reference>
<reference key="7">
    <citation type="journal article" date="1995" name="Biochemistry">
        <title>Expression and characterization of truncated human heme oxygenase (hHO-1) and a fusion protein of hHO-1 with human cytochrome P450 reductase.</title>
        <authorList>
            <person name="Wilks A."/>
            <person name="Black S.M."/>
            <person name="Miller W.L."/>
            <person name="Ortiz de Montellano P.R."/>
        </authorList>
    </citation>
    <scope>FUNCTION</scope>
    <scope>CATALYTIC ACTIVITY</scope>
    <scope>BIOPHYSICOCHEMICAL PROPERTIES</scope>
    <scope>PROTEOLYTIC CLEAVAGE</scope>
</reference>
<reference key="8">
    <citation type="journal article" date="1999" name="J. Clin. Invest.">
        <title>Oxidative stress causes enhanced endothelial cell injury in human heme oxygenase-1 deficiency.</title>
        <authorList>
            <person name="Yachie A."/>
            <person name="Niida Y."/>
            <person name="Wada T."/>
            <person name="Igarashi N."/>
            <person name="Kaneda H."/>
            <person name="Toma T."/>
            <person name="Ohta K."/>
            <person name="Kasahara Y."/>
            <person name="Koizumi S."/>
        </authorList>
    </citation>
    <scope>INVOLVEMENT IN HMOX1D</scope>
</reference>
<reference key="9">
    <citation type="journal article" date="2001" name="J. Biol. Chem.">
        <title>Disruption of an active site hydrogen bond converts human heme oxygenase-1 into a peroxidase.</title>
        <authorList>
            <person name="Lightning L.K."/>
            <person name="Huang H."/>
            <person name="Moenne-Loccoz P."/>
            <person name="Loehr T.M."/>
            <person name="Schuller D.J."/>
            <person name="Poulos T.L."/>
            <person name="de Montellano P.R."/>
        </authorList>
    </citation>
    <scope>FUNCTION</scope>
    <scope>CATALYTIC ACTIVITY</scope>
    <scope>MUTAGENESIS OF ASP-140</scope>
    <scope>SITE</scope>
</reference>
<reference key="10">
    <citation type="journal article" date="2006" name="Cell">
        <title>Global, in vivo, and site-specific phosphorylation dynamics in signaling networks.</title>
        <authorList>
            <person name="Olsen J.V."/>
            <person name="Blagoev B."/>
            <person name="Gnad F."/>
            <person name="Macek B."/>
            <person name="Kumar C."/>
            <person name="Mortensen P."/>
            <person name="Mann M."/>
        </authorList>
    </citation>
    <scope>IDENTIFICATION BY MASS SPECTROMETRY [LARGE SCALE ANALYSIS]</scope>
    <source>
        <tissue>Cervix carcinoma</tissue>
    </source>
</reference>
<reference key="11">
    <citation type="journal article" date="2009" name="J. Biol. Chem.">
        <title>Oligomerization is crucial for the stability and function of heme oxygenase-1 in the endoplasmic reticulum.</title>
        <authorList>
            <person name="Hwang H.W."/>
            <person name="Lee J.R."/>
            <person name="Chou K.Y."/>
            <person name="Suen C.S."/>
            <person name="Hwang M.J."/>
            <person name="Chen C."/>
            <person name="Shieh R.C."/>
            <person name="Chau L.Y."/>
        </authorList>
    </citation>
    <scope>FUNCTION</scope>
    <scope>CATALYTIC ACTIVITY</scope>
    <scope>SUBCELLULAR LOCATION</scope>
    <scope>SUBUNIT</scope>
    <scope>DOMAIN</scope>
    <scope>MUTAGENESIS OF TRP-270</scope>
</reference>
<reference key="12">
    <citation type="journal article" date="2010" name="Annu. Rev. Pharmacol. Toxicol.">
        <title>Mechanisms of cell protection by heme oxygenase-1.</title>
        <authorList>
            <person name="Gozzelino R."/>
            <person name="Jeney V."/>
            <person name="Soares M.P."/>
        </authorList>
    </citation>
    <scope>REVIEW ON ANTIAPOPTOTIC FUNCTION</scope>
</reference>
<reference key="13">
    <citation type="journal article" date="2010" name="J. Biol. Chem.">
        <title>CXCR3-B can mediate growth-inhibitory signals in human renal cancer cells by down-regulating the expression of heme oxygenase-1.</title>
        <authorList>
            <person name="Datta D."/>
            <person name="Banerjee P."/>
            <person name="Gasser M."/>
            <person name="Waaga-Gasser A.M."/>
            <person name="Pal S."/>
        </authorList>
    </citation>
    <scope>TISSUE SPECIFICITY</scope>
</reference>
<reference key="14">
    <citation type="journal article" date="2010" name="Sci. Signal.">
        <title>Quantitative phosphoproteomics reveals widespread full phosphorylation site occupancy during mitosis.</title>
        <authorList>
            <person name="Olsen J.V."/>
            <person name="Vermeulen M."/>
            <person name="Santamaria A."/>
            <person name="Kumar C."/>
            <person name="Miller M.L."/>
            <person name="Jensen L.J."/>
            <person name="Gnad F."/>
            <person name="Cox J."/>
            <person name="Jensen T.S."/>
            <person name="Nigg E.A."/>
            <person name="Brunak S."/>
            <person name="Mann M."/>
        </authorList>
    </citation>
    <scope>PHOSPHORYLATION [LARGE SCALE ANALYSIS] AT SER-229</scope>
    <scope>IDENTIFICATION BY MASS SPECTROMETRY [LARGE SCALE ANALYSIS]</scope>
    <source>
        <tissue>Cervix carcinoma</tissue>
    </source>
</reference>
<reference key="15">
    <citation type="journal article" date="2011" name="BMC Syst. Biol.">
        <title>Initial characterization of the human central proteome.</title>
        <authorList>
            <person name="Burkard T.R."/>
            <person name="Planyavsky M."/>
            <person name="Kaupe I."/>
            <person name="Breitwieser F.P."/>
            <person name="Buerckstuemmer T."/>
            <person name="Bennett K.L."/>
            <person name="Superti-Furga G."/>
            <person name="Colinge J."/>
        </authorList>
    </citation>
    <scope>IDENTIFICATION BY MASS SPECTROMETRY [LARGE SCALE ANALYSIS]</scope>
</reference>
<reference key="16">
    <citation type="journal article" date="2012" name="Haematologica">
        <title>Endoplasmic reticulum anchored heme-oxygenase 1 faces the cytosol.</title>
        <authorList>
            <person name="Gottlieb Y."/>
            <person name="Truman M."/>
            <person name="Cohen L.A."/>
            <person name="Leichtmann-Bardoogo Y."/>
            <person name="Meyron-Holtz E.G."/>
        </authorList>
    </citation>
    <scope>SUBCELLULAR LOCATION</scope>
    <scope>TOPOLOGY</scope>
</reference>
<reference key="17">
    <citation type="journal article" date="2022" name="Autophagy">
        <title>SARS-CoV-2 ORF3a induces RETREG1/FAM134B-dependent reticulophagy and triggers sequential ER stress and inflammatory responses during SARS-CoV-2 infection.</title>
        <authorList>
            <person name="Zhang X."/>
            <person name="Yang Z."/>
            <person name="Pan T."/>
            <person name="Long X."/>
            <person name="Sun Q."/>
            <person name="Wang P.H."/>
            <person name="Li X."/>
            <person name="Kuang E."/>
        </authorList>
    </citation>
    <scope>FUNCTION (MICROBIAL INFECTION)</scope>
    <scope>INTERACTION WITH SARS-COV-2 ORF3A</scope>
</reference>
<reference key="18">
    <citation type="journal article" date="2016" name="Cell Rep.">
        <title>APEX Fingerprinting Reveals the Subcellular Localization of Proteins of Interest.</title>
        <authorList>
            <person name="Lee S.Y."/>
            <person name="Kang M.G."/>
            <person name="Park J.S."/>
            <person name="Lee G."/>
            <person name="Ting A.Y."/>
            <person name="Rhee H.W."/>
        </authorList>
    </citation>
    <scope>SUBCELLULAR LOCATION</scope>
</reference>
<reference key="19">
    <citation type="journal article" date="1999" name="Nat. Struct. Biol.">
        <title>Crystal structure of human heme oxygenase-1.</title>
        <authorList>
            <person name="Schuller D.J."/>
            <person name="Wilks A."/>
            <person name="Ortiz de Montellano P.R."/>
            <person name="Poulos T.L."/>
        </authorList>
    </citation>
    <scope>X-RAY CRYSTALLOGRAPHY (2.08 ANGSTROMS)</scope>
</reference>
<reference key="20">
    <citation type="journal article" date="2003" name="J. Mol. Biol.">
        <title>Crystal structures of the ferric, ferrous, and ferrous-NO forms of the Asp140Ala mutant of human heme oxygenase-1: catalytic implications.</title>
        <authorList>
            <person name="Lad L."/>
            <person name="Wang J."/>
            <person name="Li H."/>
            <person name="Friedman J."/>
            <person name="Bhaskar B."/>
            <person name="Ortiz de Montellano P.R."/>
            <person name="Poulos T.L."/>
        </authorList>
    </citation>
    <scope>X-RAY CRYSTALLOGRAPHY (1.55 ANGSTROMS) OF 1-233 OF MUTANT ALA-140</scope>
    <scope>HEME-BINDING SITES</scope>
    <scope>MUTAGENESIS OF ASP-140</scope>
</reference>
<name>HMOX1_HUMAN</name>
<evidence type="ECO:0000250" key="1">
    <source>
        <dbReference type="UniProtKB" id="P14901"/>
    </source>
</evidence>
<evidence type="ECO:0000255" key="2"/>
<evidence type="ECO:0000256" key="3">
    <source>
        <dbReference type="SAM" id="MobiDB-lite"/>
    </source>
</evidence>
<evidence type="ECO:0000269" key="4">
    <source>
    </source>
</evidence>
<evidence type="ECO:0000269" key="5">
    <source>
    </source>
</evidence>
<evidence type="ECO:0000269" key="6">
    <source>
    </source>
</evidence>
<evidence type="ECO:0000269" key="7">
    <source>
    </source>
</evidence>
<evidence type="ECO:0000269" key="8">
    <source>
    </source>
</evidence>
<evidence type="ECO:0000269" key="9">
    <source>
    </source>
</evidence>
<evidence type="ECO:0000269" key="10">
    <source>
    </source>
</evidence>
<evidence type="ECO:0000269" key="11">
    <source>
    </source>
</evidence>
<evidence type="ECO:0000269" key="12">
    <source>
    </source>
</evidence>
<evidence type="ECO:0000269" key="13">
    <source>
    </source>
</evidence>
<evidence type="ECO:0000269" key="14">
    <source>
    </source>
</evidence>
<evidence type="ECO:0000269" key="15">
    <source ref="3"/>
</evidence>
<evidence type="ECO:0000303" key="16">
    <source>
    </source>
</evidence>
<evidence type="ECO:0000303" key="17">
    <source>
    </source>
</evidence>
<evidence type="ECO:0000305" key="18"/>
<evidence type="ECO:0000305" key="19">
    <source>
    </source>
</evidence>
<evidence type="ECO:0000305" key="20">
    <source>
    </source>
</evidence>
<evidence type="ECO:0007744" key="21">
    <source>
        <dbReference type="PDB" id="1OZW"/>
    </source>
</evidence>
<evidence type="ECO:0007744" key="22">
    <source>
    </source>
</evidence>
<evidence type="ECO:0007829" key="23">
    <source>
        <dbReference type="PDB" id="1N45"/>
    </source>
</evidence>
<evidence type="ECO:0007829" key="24">
    <source>
        <dbReference type="PDB" id="1NI6"/>
    </source>
</evidence>
<evidence type="ECO:0007829" key="25">
    <source>
        <dbReference type="PDB" id="3CZY"/>
    </source>
</evidence>
<organism>
    <name type="scientific">Homo sapiens</name>
    <name type="common">Human</name>
    <dbReference type="NCBI Taxonomy" id="9606"/>
    <lineage>
        <taxon>Eukaryota</taxon>
        <taxon>Metazoa</taxon>
        <taxon>Chordata</taxon>
        <taxon>Craniata</taxon>
        <taxon>Vertebrata</taxon>
        <taxon>Euteleostomi</taxon>
        <taxon>Mammalia</taxon>
        <taxon>Eutheria</taxon>
        <taxon>Euarchontoglires</taxon>
        <taxon>Primates</taxon>
        <taxon>Haplorrhini</taxon>
        <taxon>Catarrhini</taxon>
        <taxon>Hominidae</taxon>
        <taxon>Homo</taxon>
    </lineage>
</organism>
<comment type="function">
    <molecule>Heme oxygenase 1</molecule>
    <text evidence="4 6 13 16">Catalyzes the oxidative cleavage of heme at the alpha-methene bridge carbon, released as carbon monoxide (CO), to generate biliverdin IXalpha, while releasing the central heme iron chelate as ferrous iron (PubMed:11121422, PubMed:19556236, PubMed:7703255). Affords protection against programmed cell death and this cytoprotective effect relies on its ability to catabolize free heme and prevent it from sensitizing cells to undergo apoptosis (PubMed:20055707).</text>
</comment>
<comment type="function">
    <molecule>Heme oxygenase 1</molecule>
    <text evidence="12">(Microbial infection) During SARS-COV-2 infection, promotes SARS-CoV-2 ORF3A-mediated autophagy but is unlikely to be required for ORF3A-mediated induction of reticulophagy.</text>
</comment>
<comment type="function">
    <molecule>Heme oxygenase 1 soluble form</molecule>
    <text evidence="13">Catalyzes the oxidative cleavage of heme at the alpha-methene bridge carbon, released as carbon monoxide (CO), to generate biliverdin IXalpha, while releasing the central heme iron chelate as ferrous iron.</text>
</comment>
<comment type="catalytic activity">
    <reaction evidence="4 6 13">
        <text>heme b + 3 reduced [NADPH--hemoprotein reductase] + 3 O2 = biliverdin IXalpha + CO + Fe(2+) + 3 oxidized [NADPH--hemoprotein reductase] + 3 H2O + H(+)</text>
        <dbReference type="Rhea" id="RHEA:21764"/>
        <dbReference type="Rhea" id="RHEA-COMP:11964"/>
        <dbReference type="Rhea" id="RHEA-COMP:11965"/>
        <dbReference type="ChEBI" id="CHEBI:15377"/>
        <dbReference type="ChEBI" id="CHEBI:15378"/>
        <dbReference type="ChEBI" id="CHEBI:15379"/>
        <dbReference type="ChEBI" id="CHEBI:17245"/>
        <dbReference type="ChEBI" id="CHEBI:29033"/>
        <dbReference type="ChEBI" id="CHEBI:57618"/>
        <dbReference type="ChEBI" id="CHEBI:57991"/>
        <dbReference type="ChEBI" id="CHEBI:58210"/>
        <dbReference type="ChEBI" id="CHEBI:60344"/>
        <dbReference type="EC" id="1.14.14.18"/>
    </reaction>
    <physiologicalReaction direction="left-to-right" evidence="20">
        <dbReference type="Rhea" id="RHEA:21765"/>
    </physiologicalReaction>
</comment>
<comment type="biophysicochemical properties">
    <molecule>Heme oxygenase 1</molecule>
    <kinetics>
        <KM evidence="13">6 uM for heme b</KM>
        <Vmax evidence="13">102.0 nmol/h/mg enzyme for heme b</Vmax>
    </kinetics>
</comment>
<comment type="biophysicochemical properties">
    <molecule>Heme oxygenase 1 soluble form</molecule>
    <kinetics>
        <KM evidence="13">3 uM for heme b</KM>
        <Vmax evidence="13">40.0 nmol/h/mg enzyme for heme b</Vmax>
    </kinetics>
</comment>
<comment type="subunit">
    <text evidence="12">(Microbial infection) Interacts with SARS-CoV-2 ORF3A protein; the interaction promotes ORF3A-induced autophagy but is unlikely to be involved in ORF3A-mediated induction of reticulophagy.</text>
</comment>
<comment type="subunit">
    <text evidence="1 6">Homodimer and higher order homooligomer (PubMed:19556236). Oligomerization is crucial for its stability and function in the endoplasmic reticulum (PubMed:19556236). Interacts with FLVCR2; this interaction is potentiated in the presence of heme.</text>
</comment>
<comment type="interaction">
    <interactant intactId="EBI-2806151">
        <id>P09601</id>
    </interactant>
    <interactant intactId="EBI-13059134">
        <id>Q13520</id>
        <label>AQP6</label>
    </interactant>
    <organismsDiffer>false</organismsDiffer>
    <experiments>3</experiments>
</comment>
<comment type="interaction">
    <interactant intactId="EBI-2806151">
        <id>P09601</id>
    </interactant>
    <interactant intactId="EBI-11343438">
        <id>Q3SXY8</id>
        <label>ARL13B</label>
    </interactant>
    <organismsDiffer>false</organismsDiffer>
    <experiments>3</experiments>
</comment>
<comment type="interaction">
    <interactant intactId="EBI-2806151">
        <id>P09601</id>
    </interactant>
    <interactant intactId="EBI-7797864">
        <id>P11912</id>
        <label>CD79A</label>
    </interactant>
    <organismsDiffer>false</organismsDiffer>
    <experiments>3</experiments>
</comment>
<comment type="interaction">
    <interactant intactId="EBI-2806151">
        <id>P09601</id>
    </interactant>
    <interactant intactId="EBI-724524">
        <id>O75208</id>
        <label>COQ9</label>
    </interactant>
    <organismsDiffer>false</organismsDiffer>
    <experiments>3</experiments>
</comment>
<comment type="interaction">
    <interactant intactId="EBI-2806151">
        <id>P09601</id>
    </interactant>
    <interactant intactId="EBI-18013275">
        <id>Q7Z7G2</id>
        <label>CPLX4</label>
    </interactant>
    <organismsDiffer>false</organismsDiffer>
    <experiments>3</experiments>
</comment>
<comment type="interaction">
    <interactant intactId="EBI-2806151">
        <id>P09601</id>
    </interactant>
    <interactant intactId="EBI-17233035">
        <id>Q9BUF7-2</id>
        <label>CRB3</label>
    </interactant>
    <organismsDiffer>false</organismsDiffer>
    <experiments>3</experiments>
</comment>
<comment type="interaction">
    <interactant intactId="EBI-2806151">
        <id>P09601</id>
    </interactant>
    <interactant intactId="EBI-8646596">
        <id>P49447</id>
        <label>CYB561</label>
    </interactant>
    <organismsDiffer>false</organismsDiffer>
    <experiments>3</experiments>
</comment>
<comment type="interaction">
    <interactant intactId="EBI-2806151">
        <id>P09601</id>
    </interactant>
    <interactant intactId="EBI-8637742">
        <id>Q53TN4</id>
        <label>CYBRD1</label>
    </interactant>
    <organismsDiffer>false</organismsDiffer>
    <experiments>3</experiments>
</comment>
<comment type="interaction">
    <interactant intactId="EBI-2806151">
        <id>P09601</id>
    </interactant>
    <interactant intactId="EBI-18535450">
        <id>Q9GZR5</id>
        <label>ELOVL4</label>
    </interactant>
    <organismsDiffer>false</organismsDiffer>
    <experiments>3</experiments>
</comment>
<comment type="interaction">
    <interactant intactId="EBI-2806151">
        <id>P09601</id>
    </interactant>
    <interactant intactId="EBI-11037623">
        <id>Q9NYP7</id>
        <label>ELOVL5</label>
    </interactant>
    <organismsDiffer>false</organismsDiffer>
    <experiments>3</experiments>
</comment>
<comment type="interaction">
    <interactant intactId="EBI-2806151">
        <id>P09601</id>
    </interactant>
    <interactant intactId="EBI-12821617">
        <id>Q9H5J4</id>
        <label>ELOVL6</label>
    </interactant>
    <organismsDiffer>false</organismsDiffer>
    <experiments>3</experiments>
</comment>
<comment type="interaction">
    <interactant intactId="EBI-2806151">
        <id>P09601</id>
    </interactant>
    <interactant intactId="EBI-781551">
        <id>Q9Y282</id>
        <label>ERGIC3</label>
    </interactant>
    <organismsDiffer>false</organismsDiffer>
    <experiments>3</experiments>
</comment>
<comment type="interaction">
    <interactant intactId="EBI-2806151">
        <id>P09601</id>
    </interactant>
    <interactant intactId="EBI-18636064">
        <id>Q8TBP5</id>
        <label>FAM174A</label>
    </interactant>
    <organismsDiffer>false</organismsDiffer>
    <experiments>3</experiments>
</comment>
<comment type="interaction">
    <interactant intactId="EBI-2806151">
        <id>P09601</id>
    </interactant>
    <interactant intactId="EBI-18304435">
        <id>Q5JX71</id>
        <label>FAM209A</label>
    </interactant>
    <organismsDiffer>false</organismsDiffer>
    <experiments>3</experiments>
</comment>
<comment type="interaction">
    <interactant intactId="EBI-2806151">
        <id>P09601</id>
    </interactant>
    <interactant intactId="EBI-18938272">
        <id>Q96KR6</id>
        <label>FAM210B</label>
    </interactant>
    <organismsDiffer>false</organismsDiffer>
    <experiments>3</experiments>
</comment>
<comment type="interaction">
    <interactant intactId="EBI-2806151">
        <id>P09601</id>
    </interactant>
    <interactant intactId="EBI-13345167">
        <id>Q8TDT2</id>
        <label>GPR152</label>
    </interactant>
    <organismsDiffer>false</organismsDiffer>
    <experiments>3</experiments>
</comment>
<comment type="interaction">
    <interactant intactId="EBI-2806151">
        <id>P09601</id>
    </interactant>
    <interactant intactId="EBI-10266796">
        <id>Q8N5M9</id>
        <label>JAGN1</label>
    </interactant>
    <organismsDiffer>false</organismsDiffer>
    <experiments>3</experiments>
</comment>
<comment type="interaction">
    <interactant intactId="EBI-2806151">
        <id>P09601</id>
    </interactant>
    <interactant intactId="EBI-949102">
        <id>Q15800</id>
        <label>MSMO1</label>
    </interactant>
    <organismsDiffer>false</organismsDiffer>
    <experiments>3</experiments>
</comment>
<comment type="interaction">
    <interactant intactId="EBI-2806151">
        <id>P09601</id>
    </interactant>
    <interactant intactId="EBI-716063">
        <id>Q13113</id>
        <label>PDZK1IP1</label>
    </interactant>
    <organismsDiffer>false</organismsDiffer>
    <experiments>3</experiments>
</comment>
<comment type="interaction">
    <interactant intactId="EBI-2806151">
        <id>P09601</id>
    </interactant>
    <interactant intactId="EBI-752420">
        <id>Q9NUX5</id>
        <label>POT1</label>
    </interactant>
    <organismsDiffer>false</organismsDiffer>
    <experiments>2</experiments>
</comment>
<comment type="interaction">
    <interactant intactId="EBI-2806151">
        <id>P09601</id>
    </interactant>
    <interactant intactId="EBI-2855401">
        <id>Q9BY50</id>
        <label>SEC11C</label>
    </interactant>
    <organismsDiffer>false</organismsDiffer>
    <experiments>3</experiments>
</comment>
<comment type="interaction">
    <interactant intactId="EBI-2806151">
        <id>P09601</id>
    </interactant>
    <interactant intactId="EBI-3921243">
        <id>O60669</id>
        <label>SLC16A7</label>
    </interactant>
    <organismsDiffer>false</organismsDiffer>
    <experiments>3</experiments>
</comment>
<comment type="interaction">
    <interactant intactId="EBI-2806151">
        <id>P09601</id>
    </interactant>
    <interactant intactId="EBI-712466">
        <id>Q16623</id>
        <label>STX1A</label>
    </interactant>
    <organismsDiffer>false</organismsDiffer>
    <experiments>4</experiments>
</comment>
<comment type="interaction">
    <interactant intactId="EBI-2806151">
        <id>P09601</id>
    </interactant>
    <interactant intactId="EBI-12947623">
        <id>Q96MV1</id>
        <label>TLCD4</label>
    </interactant>
    <organismsDiffer>false</organismsDiffer>
    <experiments>3</experiments>
</comment>
<comment type="interaction">
    <interactant intactId="EBI-2806151">
        <id>P09601</id>
    </interactant>
    <interactant intactId="EBI-6448756">
        <id>Q96DZ7</id>
        <label>TM4SF19</label>
    </interactant>
    <organismsDiffer>false</organismsDiffer>
    <experiments>3</experiments>
</comment>
<comment type="interaction">
    <interactant intactId="EBI-2806151">
        <id>P09601</id>
    </interactant>
    <interactant intactId="EBI-8638294">
        <id>Q9NUH8</id>
        <label>TMEM14B</label>
    </interactant>
    <organismsDiffer>false</organismsDiffer>
    <experiments>3</experiments>
</comment>
<comment type="interaction">
    <interactant intactId="EBI-2806151">
        <id>P09601</id>
    </interactant>
    <interactant intactId="EBI-25475894">
        <id>P0DTC3</id>
        <label>3a</label>
    </interactant>
    <organismsDiffer>true</organismsDiffer>
    <experiments>4</experiments>
</comment>
<comment type="subcellular location">
    <subcellularLocation>
        <location evidence="6 8 9">Endoplasmic reticulum membrane</location>
        <topology evidence="2">Single-pass type IV membrane protein</topology>
        <orientation evidence="8">Cytoplasmic side</orientation>
    </subcellularLocation>
</comment>
<comment type="tissue specificity">
    <text evidence="7">Expressed at higher levels in renal cancer tissue than in normal tissue (at protein level).</text>
</comment>
<comment type="induction">
    <text evidence="10 11">Heme oxygenase 1 activity is highly inducible by its substrate heme and by various non-heme substances such as heavy metals, bromobenzene, endotoxin, oxidizing agents and UVA.</text>
</comment>
<comment type="domain">
    <text evidence="6">The transmembrane domain is necessary for its oligomerization.</text>
</comment>
<comment type="PTM">
    <text evidence="20">A soluble form arises by proteolytic removal of the membrane anchor.</text>
</comment>
<comment type="disease" evidence="14">
    <disease id="DI-03193">
        <name>Heme oxygenase 1 deficiency</name>
        <acronym>HMOX1D</acronym>
        <description>A disease characterized by impaired stress hematopoiesis, resulting in marked erythrocyte fragmentation and intravascular hemolysis, coagulation abnormalities, endothelial damage, and iron deposition in renal and hepatic tissues. Clinical features include persistent hemolytic anemia, asplenia, nephritis, generalized erythematous rash, growth retardation and hepatomegaly.</description>
        <dbReference type="MIM" id="614034"/>
    </disease>
    <text>The disease is caused by variants affecting the gene represented in this entry.</text>
</comment>
<comment type="similarity">
    <text evidence="18">Belongs to the heme oxygenase family.</text>
</comment>
<sequence>MERPQPDSMPQDLSEALKEATKEVHTQAENAEFMRNFQKGQVTRDGFKLVMASLYHIYVALEEEIERNKESPVFAPVYFPEELHRKAALEQDLAFWYGPRWQEVIPYTPAMQRYVKRLHEVGRTEPELLVAHAYTRYLGDLSGGQVLKKIAQKALDLPSSGEGLAFFTFPNIASATKFKQLYRSRMNSLEMTPAVRQRVIEEAKTAFLLNIQLFEELQELLTHDTKDQSPSRAPGLRQRASNKVQDSAPVETPRGKPPLNTRSQAPLLRWVLTLSFLVATVAVGLYAM</sequence>
<keyword id="KW-0002">3D-structure</keyword>
<keyword id="KW-0053">Apoptosis</keyword>
<keyword id="KW-0256">Endoplasmic reticulum</keyword>
<keyword id="KW-0349">Heme</keyword>
<keyword id="KW-0945">Host-virus interaction</keyword>
<keyword id="KW-0408">Iron</keyword>
<keyword id="KW-0472">Membrane</keyword>
<keyword id="KW-0479">Metal-binding</keyword>
<keyword id="KW-0560">Oxidoreductase</keyword>
<keyword id="KW-0597">Phosphoprotein</keyword>
<keyword id="KW-1267">Proteomics identification</keyword>
<keyword id="KW-1185">Reference proteome</keyword>
<keyword id="KW-0812">Transmembrane</keyword>
<keyword id="KW-1133">Transmembrane helix</keyword>
<proteinExistence type="evidence at protein level"/>
<accession>P09601</accession>
<gene>
    <name type="primary">HMOX1</name>
    <name type="synonym">HO</name>
    <name type="synonym">HO1</name>
</gene>
<protein>
    <recommendedName>
        <fullName>Heme oxygenase 1</fullName>
        <shortName>HO-1</shortName>
        <ecNumber evidence="4 6 13">1.14.14.18</ecNumber>
    </recommendedName>
    <component>
        <recommendedName>
            <fullName evidence="17">Heme oxygenase 1 soluble form</fullName>
        </recommendedName>
    </component>
</protein>
<dbReference type="EC" id="1.14.14.18" evidence="4 6 13"/>
<dbReference type="EMBL" id="X06985">
    <property type="protein sequence ID" value="CAA30045.1"/>
    <property type="molecule type" value="mRNA"/>
</dbReference>
<dbReference type="EMBL" id="CR456505">
    <property type="protein sequence ID" value="CAG30391.1"/>
    <property type="molecule type" value="mRNA"/>
</dbReference>
<dbReference type="EMBL" id="AY460337">
    <property type="protein sequence ID" value="AAR23262.1"/>
    <property type="molecule type" value="Genomic_DNA"/>
</dbReference>
<dbReference type="EMBL" id="Z82244">
    <property type="status" value="NOT_ANNOTATED_CDS"/>
    <property type="molecule type" value="Genomic_DNA"/>
</dbReference>
<dbReference type="EMBL" id="M23041">
    <property type="protein sequence ID" value="AAA50403.1"/>
    <property type="molecule type" value="mRNA"/>
</dbReference>
<dbReference type="EMBL" id="X14782">
    <property type="protein sequence ID" value="CAA32886.1"/>
    <property type="molecule type" value="Genomic_DNA"/>
</dbReference>
<dbReference type="CCDS" id="CCDS13914.1"/>
<dbReference type="PIR" id="S00325">
    <property type="entry name" value="S00325"/>
</dbReference>
<dbReference type="RefSeq" id="NP_002124.1">
    <property type="nucleotide sequence ID" value="NM_002133.3"/>
</dbReference>
<dbReference type="PDB" id="1N3U">
    <property type="method" value="X-ray"/>
    <property type="resolution" value="2.58 A"/>
    <property type="chains" value="A/B=1-233"/>
</dbReference>
<dbReference type="PDB" id="1N45">
    <property type="method" value="X-ray"/>
    <property type="resolution" value="1.50 A"/>
    <property type="chains" value="A/B=1-233"/>
</dbReference>
<dbReference type="PDB" id="1NI6">
    <property type="method" value="X-ray"/>
    <property type="resolution" value="2.10 A"/>
    <property type="chains" value="A/B/C/D=1-224"/>
</dbReference>
<dbReference type="PDB" id="1OYK">
    <property type="method" value="X-ray"/>
    <property type="resolution" value="2.59 A"/>
    <property type="chains" value="A/B=1-233"/>
</dbReference>
<dbReference type="PDB" id="1OYL">
    <property type="method" value="X-ray"/>
    <property type="resolution" value="1.59 A"/>
    <property type="chains" value="A/B=1-233"/>
</dbReference>
<dbReference type="PDB" id="1OZE">
    <property type="method" value="X-ray"/>
    <property type="resolution" value="2.19 A"/>
    <property type="chains" value="A/B=1-233"/>
</dbReference>
<dbReference type="PDB" id="1OZL">
    <property type="method" value="X-ray"/>
    <property type="resolution" value="1.58 A"/>
    <property type="chains" value="A/B=1-233"/>
</dbReference>
<dbReference type="PDB" id="1OZR">
    <property type="method" value="X-ray"/>
    <property type="resolution" value="1.74 A"/>
    <property type="chains" value="A/B=1-233"/>
</dbReference>
<dbReference type="PDB" id="1OZW">
    <property type="method" value="X-ray"/>
    <property type="resolution" value="1.55 A"/>
    <property type="chains" value="A/B=1-233"/>
</dbReference>
<dbReference type="PDB" id="1S13">
    <property type="method" value="X-ray"/>
    <property type="resolution" value="2.29 A"/>
    <property type="chains" value="A/B=1-233"/>
</dbReference>
<dbReference type="PDB" id="1S8C">
    <property type="method" value="X-ray"/>
    <property type="resolution" value="2.19 A"/>
    <property type="chains" value="A/B/C/D=1-233"/>
</dbReference>
<dbReference type="PDB" id="1T5P">
    <property type="method" value="X-ray"/>
    <property type="resolution" value="2.11 A"/>
    <property type="chains" value="A/B=1-233"/>
</dbReference>
<dbReference type="PDB" id="1TWN">
    <property type="method" value="X-ray"/>
    <property type="resolution" value="2.20 A"/>
    <property type="chains" value="A/B=1-233"/>
</dbReference>
<dbReference type="PDB" id="1TWR">
    <property type="method" value="X-ray"/>
    <property type="resolution" value="2.10 A"/>
    <property type="chains" value="A/B=1-233"/>
</dbReference>
<dbReference type="PDB" id="1XJZ">
    <property type="method" value="X-ray"/>
    <property type="resolution" value="1.88 A"/>
    <property type="chains" value="A/B=1-233"/>
</dbReference>
<dbReference type="PDB" id="1XK0">
    <property type="method" value="X-ray"/>
    <property type="resolution" value="2.18 A"/>
    <property type="chains" value="A/B=1-233"/>
</dbReference>
<dbReference type="PDB" id="1XK1">
    <property type="method" value="X-ray"/>
    <property type="resolution" value="2.08 A"/>
    <property type="chains" value="A/B=1-233"/>
</dbReference>
<dbReference type="PDB" id="1XK2">
    <property type="method" value="X-ray"/>
    <property type="resolution" value="2.20 A"/>
    <property type="chains" value="A/B=1-233"/>
</dbReference>
<dbReference type="PDB" id="1XK3">
    <property type="method" value="X-ray"/>
    <property type="resolution" value="2.08 A"/>
    <property type="chains" value="A/B=1-233"/>
</dbReference>
<dbReference type="PDB" id="3CZY">
    <property type="method" value="X-ray"/>
    <property type="resolution" value="1.54 A"/>
    <property type="chains" value="A/B=1-233"/>
</dbReference>
<dbReference type="PDB" id="3HOK">
    <property type="method" value="X-ray"/>
    <property type="resolution" value="2.19 A"/>
    <property type="chains" value="A/B=1-233"/>
</dbReference>
<dbReference type="PDB" id="3K4F">
    <property type="method" value="X-ray"/>
    <property type="resolution" value="2.17 A"/>
    <property type="chains" value="A/B=1-233"/>
</dbReference>
<dbReference type="PDB" id="3TGM">
    <property type="method" value="X-ray"/>
    <property type="resolution" value="2.85 A"/>
    <property type="chains" value="A/B=1-233"/>
</dbReference>
<dbReference type="PDB" id="4WD4">
    <property type="method" value="X-ray"/>
    <property type="resolution" value="2.95 A"/>
    <property type="chains" value="A/B/C/D=1-288"/>
</dbReference>
<dbReference type="PDB" id="5BTQ">
    <property type="method" value="X-ray"/>
    <property type="resolution" value="2.08 A"/>
    <property type="chains" value="A/B=1-233"/>
</dbReference>
<dbReference type="PDB" id="6EHA">
    <property type="method" value="X-ray"/>
    <property type="resolution" value="2.00 A"/>
    <property type="chains" value="A/B=1-288"/>
</dbReference>
<dbReference type="PDBsum" id="1N3U"/>
<dbReference type="PDBsum" id="1N45"/>
<dbReference type="PDBsum" id="1NI6"/>
<dbReference type="PDBsum" id="1OYK"/>
<dbReference type="PDBsum" id="1OYL"/>
<dbReference type="PDBsum" id="1OZE"/>
<dbReference type="PDBsum" id="1OZL"/>
<dbReference type="PDBsum" id="1OZR"/>
<dbReference type="PDBsum" id="1OZW"/>
<dbReference type="PDBsum" id="1S13"/>
<dbReference type="PDBsum" id="1S8C"/>
<dbReference type="PDBsum" id="1T5P"/>
<dbReference type="PDBsum" id="1TWN"/>
<dbReference type="PDBsum" id="1TWR"/>
<dbReference type="PDBsum" id="1XJZ"/>
<dbReference type="PDBsum" id="1XK0"/>
<dbReference type="PDBsum" id="1XK1"/>
<dbReference type="PDBsum" id="1XK2"/>
<dbReference type="PDBsum" id="1XK3"/>
<dbReference type="PDBsum" id="3CZY"/>
<dbReference type="PDBsum" id="3HOK"/>
<dbReference type="PDBsum" id="3K4F"/>
<dbReference type="PDBsum" id="3TGM"/>
<dbReference type="PDBsum" id="4WD4"/>
<dbReference type="PDBsum" id="5BTQ"/>
<dbReference type="PDBsum" id="6EHA"/>
<dbReference type="SMR" id="P09601"/>
<dbReference type="BioGRID" id="109405">
    <property type="interactions" value="159"/>
</dbReference>
<dbReference type="FunCoup" id="P09601">
    <property type="interactions" value="791"/>
</dbReference>
<dbReference type="IntAct" id="P09601">
    <property type="interactions" value="104"/>
</dbReference>
<dbReference type="MINT" id="P09601"/>
<dbReference type="STRING" id="9606.ENSP00000216117"/>
<dbReference type="BindingDB" id="P09601"/>
<dbReference type="ChEMBL" id="CHEMBL2823"/>
<dbReference type="DrugBank" id="DB07342">
    <property type="generic name" value="1-(adamantan-1-yl)-2-(1H-imidazol-1-yl)ethanone"/>
</dbReference>
<dbReference type="DrugBank" id="DB06914">
    <property type="generic name" value="1-({2-[2-(4-CHLOROPHENYL)ETHYL]-1,3-DIOXOLAN-2-YL}METHYL)-1H-IMIDAZOLE"/>
</dbReference>
<dbReference type="DrugBank" id="DB02468">
    <property type="generic name" value="12-Phenylheme"/>
</dbReference>
<dbReference type="DrugBank" id="DB03906">
    <property type="generic name" value="2-Phenylheme"/>
</dbReference>
<dbReference type="DrugBank" id="DB14001">
    <property type="generic name" value="alpha-Tocopherol succinate"/>
</dbReference>
<dbReference type="DrugBank" id="DB02073">
    <property type="generic name" value="Biliverdine IX Alpha"/>
</dbReference>
<dbReference type="DrugBank" id="DB14002">
    <property type="generic name" value="D-alpha-Tocopherol acetate"/>
</dbReference>
<dbReference type="DrugBank" id="DB18267">
    <property type="generic name" value="Ferroheme"/>
</dbReference>
<dbReference type="DrugBank" id="DB01942">
    <property type="generic name" value="Formic acid"/>
</dbReference>
<dbReference type="DrugBank" id="DB02325">
    <property type="generic name" value="Isopropyl alcohol"/>
</dbReference>
<dbReference type="DrugBank" id="DB00157">
    <property type="generic name" value="NADH"/>
</dbReference>
<dbReference type="DrugBank" id="DB09221">
    <property type="generic name" value="Polaprezinc"/>
</dbReference>
<dbReference type="DrugBank" id="DB04912">
    <property type="generic name" value="Stannsoporfin"/>
</dbReference>
<dbReference type="DrugBank" id="DB04803">
    <property type="generic name" value="Verdoheme"/>
</dbReference>
<dbReference type="DrugBank" id="DB00163">
    <property type="generic name" value="Vitamin E"/>
</dbReference>
<dbReference type="GuidetoPHARMACOLOGY" id="1441"/>
<dbReference type="GlyGen" id="P09601">
    <property type="glycosylation" value="1 site, 1 O-linked glycan (1 site)"/>
</dbReference>
<dbReference type="iPTMnet" id="P09601"/>
<dbReference type="PhosphoSitePlus" id="P09601"/>
<dbReference type="BioMuta" id="HMOX1"/>
<dbReference type="DMDM" id="123446"/>
<dbReference type="jPOST" id="P09601"/>
<dbReference type="MassIVE" id="P09601"/>
<dbReference type="PaxDb" id="9606-ENSP00000216117"/>
<dbReference type="PeptideAtlas" id="P09601"/>
<dbReference type="ProteomicsDB" id="52249"/>
<dbReference type="Pumba" id="P09601"/>
<dbReference type="Antibodypedia" id="266">
    <property type="antibodies" value="1109 antibodies from 46 providers"/>
</dbReference>
<dbReference type="DNASU" id="3162"/>
<dbReference type="Ensembl" id="ENST00000216117.9">
    <property type="protein sequence ID" value="ENSP00000216117.8"/>
    <property type="gene ID" value="ENSG00000100292.18"/>
</dbReference>
<dbReference type="GeneID" id="3162"/>
<dbReference type="KEGG" id="hsa:3162"/>
<dbReference type="MANE-Select" id="ENST00000216117.9">
    <property type="protein sequence ID" value="ENSP00000216117.8"/>
    <property type="RefSeq nucleotide sequence ID" value="NM_002133.3"/>
    <property type="RefSeq protein sequence ID" value="NP_002124.1"/>
</dbReference>
<dbReference type="AGR" id="HGNC:5013"/>
<dbReference type="CTD" id="3162"/>
<dbReference type="DisGeNET" id="3162"/>
<dbReference type="GeneCards" id="HMOX1"/>
<dbReference type="HGNC" id="HGNC:5013">
    <property type="gene designation" value="HMOX1"/>
</dbReference>
<dbReference type="HPA" id="ENSG00000100292">
    <property type="expression patterns" value="Tissue enriched (lymphoid)"/>
</dbReference>
<dbReference type="MalaCards" id="HMOX1"/>
<dbReference type="MIM" id="141250">
    <property type="type" value="gene"/>
</dbReference>
<dbReference type="MIM" id="614034">
    <property type="type" value="phenotype"/>
</dbReference>
<dbReference type="neXtProt" id="NX_P09601"/>
<dbReference type="OpenTargets" id="ENSG00000100292"/>
<dbReference type="Orphanet" id="586">
    <property type="disease" value="Cystic fibrosis"/>
</dbReference>
<dbReference type="Orphanet" id="562509">
    <property type="disease" value="Heme oxygenase-1 deficiency"/>
</dbReference>
<dbReference type="PharmGKB" id="PA29341"/>
<dbReference type="VEuPathDB" id="HostDB:ENSG00000100292"/>
<dbReference type="eggNOG" id="KOG4480">
    <property type="taxonomic scope" value="Eukaryota"/>
</dbReference>
<dbReference type="GeneTree" id="ENSGT00390000017673"/>
<dbReference type="HOGENOM" id="CLU_057050_0_0_1"/>
<dbReference type="InParanoid" id="P09601"/>
<dbReference type="OMA" id="TEQLWFV"/>
<dbReference type="OrthoDB" id="652091at2759"/>
<dbReference type="PAN-GO" id="P09601">
    <property type="GO annotations" value="6 GO annotations based on evolutionary models"/>
</dbReference>
<dbReference type="PhylomeDB" id="P09601"/>
<dbReference type="TreeFam" id="TF314786"/>
<dbReference type="BioCyc" id="MetaCyc:HS02027-MONOMER"/>
<dbReference type="BRENDA" id="1.14.14.18">
    <property type="organism ID" value="2681"/>
</dbReference>
<dbReference type="PathwayCommons" id="P09601"/>
<dbReference type="Reactome" id="R-HSA-189483">
    <property type="pathway name" value="Heme degradation"/>
</dbReference>
<dbReference type="Reactome" id="R-HSA-6785807">
    <property type="pathway name" value="Interleukin-4 and Interleukin-13 signaling"/>
</dbReference>
<dbReference type="Reactome" id="R-HSA-844456">
    <property type="pathway name" value="The NLRP3 inflammasome"/>
</dbReference>
<dbReference type="Reactome" id="R-HSA-917937">
    <property type="pathway name" value="Iron uptake and transport"/>
</dbReference>
<dbReference type="Reactome" id="R-HSA-9609523">
    <property type="pathway name" value="Insertion of tail-anchored proteins into the endoplasmic reticulum membrane"/>
</dbReference>
<dbReference type="Reactome" id="R-HSA-9660826">
    <property type="pathway name" value="Purinergic signaling in leishmaniasis infection"/>
</dbReference>
<dbReference type="Reactome" id="R-HSA-9707564">
    <property type="pathway name" value="Cytoprotection by HMOX1"/>
</dbReference>
<dbReference type="Reactome" id="R-HSA-9707587">
    <property type="pathway name" value="Regulation of HMOX1 expression and activity"/>
</dbReference>
<dbReference type="Reactome" id="R-HSA-9707616">
    <property type="pathway name" value="Heme signaling"/>
</dbReference>
<dbReference type="Reactome" id="R-HSA-9818027">
    <property type="pathway name" value="NFE2L2 regulating anti-oxidant/detoxification enzymes"/>
</dbReference>
<dbReference type="SignaLink" id="P09601"/>
<dbReference type="SIGNOR" id="P09601"/>
<dbReference type="BioGRID-ORCS" id="3162">
    <property type="hits" value="17 hits in 1173 CRISPR screens"/>
</dbReference>
<dbReference type="ChiTaRS" id="HMOX1">
    <property type="organism name" value="human"/>
</dbReference>
<dbReference type="EvolutionaryTrace" id="P09601"/>
<dbReference type="GeneWiki" id="HMOX1"/>
<dbReference type="GenomeRNAi" id="3162"/>
<dbReference type="Pharos" id="P09601">
    <property type="development level" value="Tchem"/>
</dbReference>
<dbReference type="PRO" id="PR:P09601"/>
<dbReference type="Proteomes" id="UP000005640">
    <property type="component" value="Chromosome 22"/>
</dbReference>
<dbReference type="RNAct" id="P09601">
    <property type="molecule type" value="protein"/>
</dbReference>
<dbReference type="Bgee" id="ENSG00000100292">
    <property type="expression patterns" value="Expressed in cartilage tissue and 147 other cell types or tissues"/>
</dbReference>
<dbReference type="ExpressionAtlas" id="P09601">
    <property type="expression patterns" value="baseline and differential"/>
</dbReference>
<dbReference type="GO" id="GO:0005829">
    <property type="term" value="C:cytosol"/>
    <property type="evidence" value="ECO:0000304"/>
    <property type="project" value="Reactome"/>
</dbReference>
<dbReference type="GO" id="GO:0005783">
    <property type="term" value="C:endoplasmic reticulum"/>
    <property type="evidence" value="ECO:0000314"/>
    <property type="project" value="UniProtKB"/>
</dbReference>
<dbReference type="GO" id="GO:0005789">
    <property type="term" value="C:endoplasmic reticulum membrane"/>
    <property type="evidence" value="ECO:0000314"/>
    <property type="project" value="UniProtKB"/>
</dbReference>
<dbReference type="GO" id="GO:0005615">
    <property type="term" value="C:extracellular space"/>
    <property type="evidence" value="ECO:0000304"/>
    <property type="project" value="BHF-UCL"/>
</dbReference>
<dbReference type="GO" id="GO:0016020">
    <property type="term" value="C:membrane"/>
    <property type="evidence" value="ECO:0000304"/>
    <property type="project" value="ProtInc"/>
</dbReference>
<dbReference type="GO" id="GO:0005741">
    <property type="term" value="C:mitochondrial outer membrane"/>
    <property type="evidence" value="ECO:0000304"/>
    <property type="project" value="Reactome"/>
</dbReference>
<dbReference type="GO" id="GO:0005654">
    <property type="term" value="C:nucleoplasm"/>
    <property type="evidence" value="ECO:0000304"/>
    <property type="project" value="Reactome"/>
</dbReference>
<dbReference type="GO" id="GO:0005634">
    <property type="term" value="C:nucleus"/>
    <property type="evidence" value="ECO:0000250"/>
    <property type="project" value="BHF-UCL"/>
</dbReference>
<dbReference type="GO" id="GO:0048471">
    <property type="term" value="C:perinuclear region of cytoplasm"/>
    <property type="evidence" value="ECO:0000314"/>
    <property type="project" value="UniProtKB"/>
</dbReference>
<dbReference type="GO" id="GO:0019899">
    <property type="term" value="F:enzyme binding"/>
    <property type="evidence" value="ECO:0000250"/>
    <property type="project" value="BHF-UCL"/>
</dbReference>
<dbReference type="GO" id="GO:0020037">
    <property type="term" value="F:heme binding"/>
    <property type="evidence" value="ECO:0000314"/>
    <property type="project" value="BHF-UCL"/>
</dbReference>
<dbReference type="GO" id="GO:0004392">
    <property type="term" value="F:heme oxygenase (decyclizing) activity"/>
    <property type="evidence" value="ECO:0000314"/>
    <property type="project" value="UniProtKB"/>
</dbReference>
<dbReference type="GO" id="GO:0042802">
    <property type="term" value="F:identical protein binding"/>
    <property type="evidence" value="ECO:0000353"/>
    <property type="project" value="UniProtKB"/>
</dbReference>
<dbReference type="GO" id="GO:0046872">
    <property type="term" value="F:metal ion binding"/>
    <property type="evidence" value="ECO:0007669"/>
    <property type="project" value="UniProtKB-KW"/>
</dbReference>
<dbReference type="GO" id="GO:0042803">
    <property type="term" value="F:protein homodimerization activity"/>
    <property type="evidence" value="ECO:0000314"/>
    <property type="project" value="UniProtKB"/>
</dbReference>
<dbReference type="GO" id="GO:0005198">
    <property type="term" value="F:structural molecule activity"/>
    <property type="evidence" value="ECO:0000315"/>
    <property type="project" value="UniProtKB"/>
</dbReference>
<dbReference type="GO" id="GO:0001525">
    <property type="term" value="P:angiogenesis"/>
    <property type="evidence" value="ECO:0000304"/>
    <property type="project" value="BHF-UCL"/>
</dbReference>
<dbReference type="GO" id="GO:0071243">
    <property type="term" value="P:cellular response to arsenic-containing substance"/>
    <property type="evidence" value="ECO:0007669"/>
    <property type="project" value="Ensembl"/>
</dbReference>
<dbReference type="GO" id="GO:0071276">
    <property type="term" value="P:cellular response to cadmium ion"/>
    <property type="evidence" value="ECO:0007669"/>
    <property type="project" value="Ensembl"/>
</dbReference>
<dbReference type="GO" id="GO:0072719">
    <property type="term" value="P:cellular response to cisplatin"/>
    <property type="evidence" value="ECO:0007669"/>
    <property type="project" value="Ensembl"/>
</dbReference>
<dbReference type="GO" id="GO:0034605">
    <property type="term" value="P:cellular response to heat"/>
    <property type="evidence" value="ECO:0000315"/>
    <property type="project" value="UniProtKB"/>
</dbReference>
<dbReference type="GO" id="GO:0001935">
    <property type="term" value="P:endothelial cell proliferation"/>
    <property type="evidence" value="ECO:0000304"/>
    <property type="project" value="BHF-UCL"/>
</dbReference>
<dbReference type="GO" id="GO:1904019">
    <property type="term" value="P:epithelial cell apoptotic process"/>
    <property type="evidence" value="ECO:0007669"/>
    <property type="project" value="Ensembl"/>
</dbReference>
<dbReference type="GO" id="GO:0034101">
    <property type="term" value="P:erythrocyte homeostasis"/>
    <property type="evidence" value="ECO:0000315"/>
    <property type="project" value="BHF-UCL"/>
</dbReference>
<dbReference type="GO" id="GO:0042167">
    <property type="term" value="P:heme catabolic process"/>
    <property type="evidence" value="ECO:0000314"/>
    <property type="project" value="BHF-UCL"/>
</dbReference>
<dbReference type="GO" id="GO:0006788">
    <property type="term" value="P:heme oxidation"/>
    <property type="evidence" value="ECO:0000314"/>
    <property type="project" value="BHF-UCL"/>
</dbReference>
<dbReference type="GO" id="GO:0006879">
    <property type="term" value="P:intracellular iron ion homeostasis"/>
    <property type="evidence" value="ECO:0000314"/>
    <property type="project" value="BHF-UCL"/>
</dbReference>
<dbReference type="GO" id="GO:0035556">
    <property type="term" value="P:intracellular signal transduction"/>
    <property type="evidence" value="ECO:0000304"/>
    <property type="project" value="BHF-UCL"/>
</dbReference>
<dbReference type="GO" id="GO:0034383">
    <property type="term" value="P:low-density lipoprotein particle clearance"/>
    <property type="evidence" value="ECO:0000304"/>
    <property type="project" value="BHF-UCL"/>
</dbReference>
<dbReference type="GO" id="GO:0016236">
    <property type="term" value="P:macroautophagy"/>
    <property type="evidence" value="ECO:0007669"/>
    <property type="project" value="Ensembl"/>
</dbReference>
<dbReference type="GO" id="GO:0060586">
    <property type="term" value="P:multicellular organismal-level iron ion homeostasis"/>
    <property type="evidence" value="ECO:0000315"/>
    <property type="project" value="BHF-UCL"/>
</dbReference>
<dbReference type="GO" id="GO:1900016">
    <property type="term" value="P:negative regulation of cytokine production involved in inflammatory response"/>
    <property type="evidence" value="ECO:0000250"/>
    <property type="project" value="UniProt"/>
</dbReference>
<dbReference type="GO" id="GO:1902042">
    <property type="term" value="P:negative regulation of extrinsic apoptotic signaling pathway via death domain receptors"/>
    <property type="evidence" value="ECO:0000315"/>
    <property type="project" value="BHF-UCL"/>
</dbReference>
<dbReference type="GO" id="GO:0110076">
    <property type="term" value="P:negative regulation of ferroptosis"/>
    <property type="evidence" value="ECO:0000315"/>
    <property type="project" value="UniProtKB"/>
</dbReference>
<dbReference type="GO" id="GO:0002686">
    <property type="term" value="P:negative regulation of leukocyte migration"/>
    <property type="evidence" value="ECO:0000304"/>
    <property type="project" value="BHF-UCL"/>
</dbReference>
<dbReference type="GO" id="GO:0016242">
    <property type="term" value="P:negative regulation of macroautophagy"/>
    <property type="evidence" value="ECO:0007669"/>
    <property type="project" value="Ensembl"/>
</dbReference>
<dbReference type="GO" id="GO:0048662">
    <property type="term" value="P:negative regulation of smooth muscle cell proliferation"/>
    <property type="evidence" value="ECO:0000314"/>
    <property type="project" value="UniProtKB"/>
</dbReference>
<dbReference type="GO" id="GO:0045766">
    <property type="term" value="P:positive regulation of angiogenesis"/>
    <property type="evidence" value="ECO:0000314"/>
    <property type="project" value="BHF-UCL"/>
</dbReference>
<dbReference type="GO" id="GO:1903589">
    <property type="term" value="P:positive regulation of blood vessel endothelial cell proliferation involved in sprouting angiogenesis"/>
    <property type="evidence" value="ECO:0000316"/>
    <property type="project" value="BHF-UCL"/>
</dbReference>
<dbReference type="GO" id="GO:0043123">
    <property type="term" value="P:positive regulation of canonical NF-kappaB signal transduction"/>
    <property type="evidence" value="ECO:0007001"/>
    <property type="project" value="UniProtKB"/>
</dbReference>
<dbReference type="GO" id="GO:0090050">
    <property type="term" value="P:positive regulation of cell migration involved in sprouting angiogenesis"/>
    <property type="evidence" value="ECO:0000316"/>
    <property type="project" value="BHF-UCL"/>
</dbReference>
<dbReference type="GO" id="GO:0032722">
    <property type="term" value="P:positive regulation of chemokine production"/>
    <property type="evidence" value="ECO:0000304"/>
    <property type="project" value="BHF-UCL"/>
</dbReference>
<dbReference type="GO" id="GO:1904037">
    <property type="term" value="P:positive regulation of epithelial cell apoptotic process"/>
    <property type="evidence" value="ECO:0007669"/>
    <property type="project" value="Ensembl"/>
</dbReference>
<dbReference type="GO" id="GO:0016239">
    <property type="term" value="P:positive regulation of macroautophagy"/>
    <property type="evidence" value="ECO:0007669"/>
    <property type="project" value="Ensembl"/>
</dbReference>
<dbReference type="GO" id="GO:0048661">
    <property type="term" value="P:positive regulation of smooth muscle cell proliferation"/>
    <property type="evidence" value="ECO:0000314"/>
    <property type="project" value="UniProtKB"/>
</dbReference>
<dbReference type="GO" id="GO:0045765">
    <property type="term" value="P:regulation of angiogenesis"/>
    <property type="evidence" value="ECO:0000304"/>
    <property type="project" value="BHF-UCL"/>
</dbReference>
<dbReference type="GO" id="GO:0006357">
    <property type="term" value="P:regulation of transcription by RNA polymerase II"/>
    <property type="evidence" value="ECO:0000250"/>
    <property type="project" value="BHF-UCL"/>
</dbReference>
<dbReference type="GO" id="GO:0042542">
    <property type="term" value="P:response to hydrogen peroxide"/>
    <property type="evidence" value="ECO:0000250"/>
    <property type="project" value="BHF-UCL"/>
</dbReference>
<dbReference type="GO" id="GO:0035094">
    <property type="term" value="P:response to nicotine"/>
    <property type="evidence" value="ECO:0000314"/>
    <property type="project" value="BHF-UCL"/>
</dbReference>
<dbReference type="GO" id="GO:0006979">
    <property type="term" value="P:response to oxidative stress"/>
    <property type="evidence" value="ECO:0000315"/>
    <property type="project" value="BHF-UCL"/>
</dbReference>
<dbReference type="GO" id="GO:0014806">
    <property type="term" value="P:smooth muscle hyperplasia"/>
    <property type="evidence" value="ECO:0000304"/>
    <property type="project" value="BHF-UCL"/>
</dbReference>
<dbReference type="GO" id="GO:0002246">
    <property type="term" value="P:wound healing involved in inflammatory response"/>
    <property type="evidence" value="ECO:0000315"/>
    <property type="project" value="BHF-UCL"/>
</dbReference>
<dbReference type="CDD" id="cd00232">
    <property type="entry name" value="HemeO-like"/>
    <property type="match status" value="1"/>
</dbReference>
<dbReference type="FunFam" id="1.20.910.10:FF:000001">
    <property type="entry name" value="Heme oxygenase 1"/>
    <property type="match status" value="1"/>
</dbReference>
<dbReference type="Gene3D" id="1.20.910.10">
    <property type="entry name" value="Heme oxygenase-like"/>
    <property type="match status" value="1"/>
</dbReference>
<dbReference type="InterPro" id="IPR002051">
    <property type="entry name" value="Haem_Oase"/>
</dbReference>
<dbReference type="InterPro" id="IPR016053">
    <property type="entry name" value="Haem_Oase-like"/>
</dbReference>
<dbReference type="InterPro" id="IPR016084">
    <property type="entry name" value="Haem_Oase-like_multi-hlx"/>
</dbReference>
<dbReference type="InterPro" id="IPR018207">
    <property type="entry name" value="Haem_oxygenase_CS"/>
</dbReference>
<dbReference type="PANTHER" id="PTHR10720">
    <property type="entry name" value="HEME OXYGENASE"/>
    <property type="match status" value="1"/>
</dbReference>
<dbReference type="PANTHER" id="PTHR10720:SF1">
    <property type="entry name" value="HEME OXYGENASE 1"/>
    <property type="match status" value="1"/>
</dbReference>
<dbReference type="Pfam" id="PF01126">
    <property type="entry name" value="Heme_oxygenase"/>
    <property type="match status" value="1"/>
</dbReference>
<dbReference type="PIRSF" id="PIRSF000343">
    <property type="entry name" value="Haem_Oase"/>
    <property type="match status" value="1"/>
</dbReference>
<dbReference type="PRINTS" id="PR00088">
    <property type="entry name" value="HAEMOXYGNASE"/>
</dbReference>
<dbReference type="SUPFAM" id="SSF48613">
    <property type="entry name" value="Heme oxygenase-like"/>
    <property type="match status" value="1"/>
</dbReference>
<dbReference type="PROSITE" id="PS00593">
    <property type="entry name" value="HEME_OXYGENASE"/>
    <property type="match status" value="1"/>
</dbReference>
<feature type="chain" id="PRO_0000209687" description="Heme oxygenase 1">
    <location>
        <begin position="1"/>
        <end position="288"/>
    </location>
</feature>
<feature type="chain" id="PRO_0000455621" description="Heme oxygenase 1 soluble form" evidence="20">
    <location>
        <begin position="1"/>
        <end position="265"/>
    </location>
</feature>
<feature type="topological domain" description="Cytoplasmic" evidence="19">
    <location>
        <begin position="1"/>
        <end position="265"/>
    </location>
</feature>
<feature type="transmembrane region" description="Helical; Anchor for type IV membrane protein" evidence="2">
    <location>
        <begin position="266"/>
        <end position="288"/>
    </location>
</feature>
<feature type="region of interest" description="Disordered" evidence="3">
    <location>
        <begin position="223"/>
        <end position="260"/>
    </location>
</feature>
<feature type="binding site" evidence="5 21">
    <location>
        <position position="18"/>
    </location>
    <ligand>
        <name>heme b</name>
        <dbReference type="ChEBI" id="CHEBI:60344"/>
    </ligand>
</feature>
<feature type="binding site" description="axial binding residue" evidence="5 21">
    <location>
        <position position="25"/>
    </location>
    <ligand>
        <name>heme b</name>
        <dbReference type="ChEBI" id="CHEBI:60344"/>
    </ligand>
    <ligandPart>
        <name>Fe</name>
        <dbReference type="ChEBI" id="CHEBI:18248"/>
    </ligandPart>
</feature>
<feature type="binding site" evidence="5 21">
    <location>
        <position position="134"/>
    </location>
    <ligand>
        <name>heme b</name>
        <dbReference type="ChEBI" id="CHEBI:60344"/>
    </ligand>
</feature>
<feature type="binding site" evidence="5 21">
    <location>
        <position position="183"/>
    </location>
    <ligand>
        <name>heme b</name>
        <dbReference type="ChEBI" id="CHEBI:60344"/>
    </ligand>
</feature>
<feature type="site" description="Important for catalytic activity" evidence="4">
    <location>
        <position position="140"/>
    </location>
</feature>
<feature type="modified residue" description="Phosphoserine" evidence="22">
    <location>
        <position position="229"/>
    </location>
</feature>
<feature type="sequence variant" id="VAR_019165" description="In dbSNP:rs2071747." evidence="15">
    <original>D</original>
    <variation>H</variation>
    <location>
        <position position="7"/>
    </location>
</feature>
<feature type="sequence variant" id="VAR_022156" description="In dbSNP:rs9282702.">
    <original>P</original>
    <variation>L</variation>
    <location>
        <position position="106"/>
    </location>
</feature>
<feature type="mutagenesis site" description="Inactive as a heme oxygenase but active as a peroxidase." evidence="4 5">
    <original>D</original>
    <variation>A</variation>
    <variation>H</variation>
    <variation>N</variation>
    <variation>F</variation>
    <variation>L</variation>
    <location>
        <position position="140"/>
    </location>
</feature>
<feature type="mutagenesis site" description="No effect on catalytic activity, oligomerization and localization to the endoplasmic reticulum." evidence="6">
    <original>W</original>
    <variation>A</variation>
    <location>
        <position position="270"/>
    </location>
</feature>
<feature type="mutagenesis site" description="Significant reduction in catalytic activity, reduced oligomerization, reduced endoplasmic reticulum localization with cytoplasmic mislocalization." evidence="6">
    <original>W</original>
    <variation>N</variation>
    <location>
        <position position="270"/>
    </location>
</feature>
<feature type="helix" evidence="24">
    <location>
        <begin position="6"/>
        <end position="8"/>
    </location>
</feature>
<feature type="helix" evidence="23">
    <location>
        <begin position="13"/>
        <end position="20"/>
    </location>
</feature>
<feature type="helix" evidence="23">
    <location>
        <begin position="22"/>
        <end position="30"/>
    </location>
</feature>
<feature type="helix" evidence="23">
    <location>
        <begin position="32"/>
        <end position="38"/>
    </location>
</feature>
<feature type="helix" evidence="23">
    <location>
        <begin position="44"/>
        <end position="68"/>
    </location>
</feature>
<feature type="turn" evidence="23">
    <location>
        <begin position="72"/>
        <end position="74"/>
    </location>
</feature>
<feature type="helix" evidence="23">
    <location>
        <begin position="75"/>
        <end position="77"/>
    </location>
</feature>
<feature type="helix" evidence="23">
    <location>
        <begin position="80"/>
        <end position="83"/>
    </location>
</feature>
<feature type="helix" evidence="23">
    <location>
        <begin position="86"/>
        <end position="97"/>
    </location>
</feature>
<feature type="helix" evidence="23">
    <location>
        <begin position="101"/>
        <end position="103"/>
    </location>
</feature>
<feature type="helix" evidence="23">
    <location>
        <begin position="109"/>
        <end position="124"/>
    </location>
</feature>
<feature type="helix" evidence="23">
    <location>
        <begin position="126"/>
        <end position="128"/>
    </location>
</feature>
<feature type="helix" evidence="23">
    <location>
        <begin position="129"/>
        <end position="155"/>
    </location>
</feature>
<feature type="strand" evidence="25">
    <location>
        <begin position="159"/>
        <end position="161"/>
    </location>
</feature>
<feature type="helix" evidence="23">
    <location>
        <begin position="165"/>
        <end position="167"/>
    </location>
</feature>
<feature type="helix" evidence="23">
    <location>
        <begin position="175"/>
        <end position="188"/>
    </location>
</feature>
<feature type="helix" evidence="23">
    <location>
        <begin position="193"/>
        <end position="220"/>
    </location>
</feature>